<gene>
    <name evidence="1" type="primary">atpG</name>
    <name type="ordered locus">MAG3550</name>
</gene>
<comment type="function">
    <text evidence="1">Produces ATP from ADP in the presence of a proton gradient across the membrane. The gamma chain is believed to be important in regulating ATPase activity and the flow of protons through the CF(0) complex.</text>
</comment>
<comment type="subunit">
    <text evidence="1">F-type ATPases have 2 components, CF(1) - the catalytic core - and CF(0) - the membrane proton channel. CF(1) has five subunits: alpha(3), beta(3), gamma(1), delta(1), epsilon(1). CF(0) has three main subunits: a, b and c.</text>
</comment>
<comment type="subcellular location">
    <subcellularLocation>
        <location evidence="1">Cell membrane</location>
        <topology evidence="1">Peripheral membrane protein</topology>
    </subcellularLocation>
</comment>
<comment type="similarity">
    <text evidence="1">Belongs to the ATPase gamma chain family.</text>
</comment>
<accession>A5IYE4</accession>
<keyword id="KW-0066">ATP synthesis</keyword>
<keyword id="KW-1003">Cell membrane</keyword>
<keyword id="KW-0139">CF(1)</keyword>
<keyword id="KW-0375">Hydrogen ion transport</keyword>
<keyword id="KW-0406">Ion transport</keyword>
<keyword id="KW-0472">Membrane</keyword>
<keyword id="KW-1185">Reference proteome</keyword>
<keyword id="KW-0813">Transport</keyword>
<proteinExistence type="inferred from homology"/>
<name>ATPG_MYCAP</name>
<dbReference type="EMBL" id="CU179680">
    <property type="protein sequence ID" value="CAL59053.1"/>
    <property type="molecule type" value="Genomic_DNA"/>
</dbReference>
<dbReference type="RefSeq" id="WP_011949528.1">
    <property type="nucleotide sequence ID" value="NC_009497.1"/>
</dbReference>
<dbReference type="SMR" id="A5IYE4"/>
<dbReference type="STRING" id="347257.MAG3550"/>
<dbReference type="GeneID" id="93358113"/>
<dbReference type="KEGG" id="maa:MAG3550"/>
<dbReference type="HOGENOM" id="CLU_050669_0_1_14"/>
<dbReference type="Proteomes" id="UP000007065">
    <property type="component" value="Chromosome"/>
</dbReference>
<dbReference type="GO" id="GO:0005886">
    <property type="term" value="C:plasma membrane"/>
    <property type="evidence" value="ECO:0007669"/>
    <property type="project" value="UniProtKB-SubCell"/>
</dbReference>
<dbReference type="GO" id="GO:0045259">
    <property type="term" value="C:proton-transporting ATP synthase complex"/>
    <property type="evidence" value="ECO:0007669"/>
    <property type="project" value="UniProtKB-KW"/>
</dbReference>
<dbReference type="GO" id="GO:0005524">
    <property type="term" value="F:ATP binding"/>
    <property type="evidence" value="ECO:0007669"/>
    <property type="project" value="UniProtKB-UniRule"/>
</dbReference>
<dbReference type="GO" id="GO:0046933">
    <property type="term" value="F:proton-transporting ATP synthase activity, rotational mechanism"/>
    <property type="evidence" value="ECO:0007669"/>
    <property type="project" value="UniProtKB-UniRule"/>
</dbReference>
<dbReference type="GO" id="GO:0042777">
    <property type="term" value="P:proton motive force-driven plasma membrane ATP synthesis"/>
    <property type="evidence" value="ECO:0007669"/>
    <property type="project" value="UniProtKB-UniRule"/>
</dbReference>
<dbReference type="CDD" id="cd12151">
    <property type="entry name" value="F1-ATPase_gamma"/>
    <property type="match status" value="1"/>
</dbReference>
<dbReference type="Gene3D" id="3.40.1380.10">
    <property type="match status" value="1"/>
</dbReference>
<dbReference type="Gene3D" id="1.10.287.80">
    <property type="entry name" value="ATP synthase, gamma subunit, helix hairpin domain"/>
    <property type="match status" value="1"/>
</dbReference>
<dbReference type="HAMAP" id="MF_00815">
    <property type="entry name" value="ATP_synth_gamma_bact"/>
    <property type="match status" value="1"/>
</dbReference>
<dbReference type="InterPro" id="IPR035968">
    <property type="entry name" value="ATP_synth_F1_ATPase_gsu"/>
</dbReference>
<dbReference type="InterPro" id="IPR000131">
    <property type="entry name" value="ATP_synth_F1_gsu"/>
</dbReference>
<dbReference type="InterPro" id="IPR023632">
    <property type="entry name" value="ATP_synth_F1_gsu_CS"/>
</dbReference>
<dbReference type="NCBIfam" id="TIGR01146">
    <property type="entry name" value="ATPsyn_F1gamma"/>
    <property type="match status" value="1"/>
</dbReference>
<dbReference type="PANTHER" id="PTHR11693">
    <property type="entry name" value="ATP SYNTHASE GAMMA CHAIN"/>
    <property type="match status" value="1"/>
</dbReference>
<dbReference type="PANTHER" id="PTHR11693:SF22">
    <property type="entry name" value="ATP SYNTHASE SUBUNIT GAMMA, MITOCHONDRIAL"/>
    <property type="match status" value="1"/>
</dbReference>
<dbReference type="Pfam" id="PF00231">
    <property type="entry name" value="ATP-synt"/>
    <property type="match status" value="1"/>
</dbReference>
<dbReference type="PRINTS" id="PR00126">
    <property type="entry name" value="ATPASEGAMMA"/>
</dbReference>
<dbReference type="SUPFAM" id="SSF52943">
    <property type="entry name" value="ATP synthase (F1-ATPase), gamma subunit"/>
    <property type="match status" value="1"/>
</dbReference>
<dbReference type="PROSITE" id="PS00153">
    <property type="entry name" value="ATPASE_GAMMA"/>
    <property type="match status" value="1"/>
</dbReference>
<reference key="1">
    <citation type="journal article" date="2007" name="PLoS Genet.">
        <title>Being pathogenic, plastic, and sexual while living with a nearly minimal bacterial genome.</title>
        <authorList>
            <person name="Sirand-Pugnet P."/>
            <person name="Lartigue C."/>
            <person name="Marenda M."/>
            <person name="Jacob D."/>
            <person name="Barre A."/>
            <person name="Barbe V."/>
            <person name="Schenowitz C."/>
            <person name="Mangenot S."/>
            <person name="Couloux A."/>
            <person name="Segurens B."/>
            <person name="de Daruvar A."/>
            <person name="Blanchard A."/>
            <person name="Citti C."/>
        </authorList>
    </citation>
    <scope>NUCLEOTIDE SEQUENCE [LARGE SCALE GENOMIC DNA]</scope>
    <source>
        <strain>NCTC 10123 / CIP 59.7 / PG2</strain>
    </source>
</reference>
<feature type="chain" id="PRO_1000134180" description="ATP synthase gamma chain">
    <location>
        <begin position="1"/>
        <end position="287"/>
    </location>
</feature>
<sequence>MSSIQSIQSRIKTVQSIRKITHAMELVSYSKLKKAKTAFDEVEKYNLLIDQTFNKIFENISHDDLKELMKSRNNSKSKLYIIVTSNLGLAGAYNANVIKLVKETVTSDDYLIIIGSYGVRALRQQYNEQIINLSDITTSKRTSTLVSKIIKRAFKYYRNGAVSSINFIYTKFINNLVQEELCEKVFPFDEQMIREHIDRKEIDYKLEFEPSAKDVLADAIPLFVDSKLHLAMATSLISEHSARRSAMENATRNSDSLITELDMEFKRKRQAKITNEIIEIVSGADAV</sequence>
<organism>
    <name type="scientific">Mycoplasmopsis agalactiae (strain NCTC 10123 / CIP 59.7 / PG2)</name>
    <name type="common">Mycoplasma agalactiae</name>
    <dbReference type="NCBI Taxonomy" id="347257"/>
    <lineage>
        <taxon>Bacteria</taxon>
        <taxon>Bacillati</taxon>
        <taxon>Mycoplasmatota</taxon>
        <taxon>Mycoplasmoidales</taxon>
        <taxon>Metamycoplasmataceae</taxon>
        <taxon>Mycoplasmopsis</taxon>
    </lineage>
</organism>
<protein>
    <recommendedName>
        <fullName evidence="1">ATP synthase gamma chain</fullName>
    </recommendedName>
    <alternativeName>
        <fullName evidence="1">ATP synthase F1 sector gamma subunit</fullName>
    </alternativeName>
    <alternativeName>
        <fullName evidence="1">F-ATPase gamma subunit</fullName>
    </alternativeName>
</protein>
<evidence type="ECO:0000255" key="1">
    <source>
        <dbReference type="HAMAP-Rule" id="MF_00815"/>
    </source>
</evidence>